<keyword id="KW-0378">Hydrolase</keyword>
<keyword id="KW-0479">Metal-binding</keyword>
<keyword id="KW-1185">Reference proteome</keyword>
<organism>
    <name type="scientific">Aedes aegypti</name>
    <name type="common">Yellowfever mosquito</name>
    <name type="synonym">Culex aegypti</name>
    <dbReference type="NCBI Taxonomy" id="7159"/>
    <lineage>
        <taxon>Eukaryota</taxon>
        <taxon>Metazoa</taxon>
        <taxon>Ecdysozoa</taxon>
        <taxon>Arthropoda</taxon>
        <taxon>Hexapoda</taxon>
        <taxon>Insecta</taxon>
        <taxon>Pterygota</taxon>
        <taxon>Neoptera</taxon>
        <taxon>Endopterygota</taxon>
        <taxon>Diptera</taxon>
        <taxon>Nematocera</taxon>
        <taxon>Culicoidea</taxon>
        <taxon>Culicidae</taxon>
        <taxon>Culicinae</taxon>
        <taxon>Aedini</taxon>
        <taxon>Aedes</taxon>
        <taxon>Stegomyia</taxon>
    </lineage>
</organism>
<comment type="cofactor">
    <cofactor evidence="1">
        <name>a divalent metal cation</name>
        <dbReference type="ChEBI" id="CHEBI:60240"/>
    </cofactor>
    <text evidence="1">Binds 2 divalent metal cations per subunit.</text>
</comment>
<comment type="similarity">
    <text evidence="3">Belongs to the metallo-dependent hydrolases superfamily. Phosphotriesterase family.</text>
</comment>
<reference key="1">
    <citation type="journal article" date="2007" name="Science">
        <title>Genome sequence of Aedes aegypti, a major arbovirus vector.</title>
        <authorList>
            <person name="Nene V."/>
            <person name="Wortman J.R."/>
            <person name="Lawson D."/>
            <person name="Haas B.J."/>
            <person name="Kodira C.D."/>
            <person name="Tu Z.J."/>
            <person name="Loftus B.J."/>
            <person name="Xi Z."/>
            <person name="Megy K."/>
            <person name="Grabherr M."/>
            <person name="Ren Q."/>
            <person name="Zdobnov E.M."/>
            <person name="Lobo N.F."/>
            <person name="Campbell K.S."/>
            <person name="Brown S.E."/>
            <person name="Bonaldo M.F."/>
            <person name="Zhu J."/>
            <person name="Sinkins S.P."/>
            <person name="Hogenkamp D.G."/>
            <person name="Amedeo P."/>
            <person name="Arensburger P."/>
            <person name="Atkinson P.W."/>
            <person name="Bidwell S.L."/>
            <person name="Biedler J."/>
            <person name="Birney E."/>
            <person name="Bruggner R.V."/>
            <person name="Costas J."/>
            <person name="Coy M.R."/>
            <person name="Crabtree J."/>
            <person name="Crawford M."/>
            <person name="DeBruyn B."/>
            <person name="DeCaprio D."/>
            <person name="Eiglmeier K."/>
            <person name="Eisenstadt E."/>
            <person name="El-Dorry H."/>
            <person name="Gelbart W.M."/>
            <person name="Gomes S.L."/>
            <person name="Hammond M."/>
            <person name="Hannick L.I."/>
            <person name="Hogan J.R."/>
            <person name="Holmes M.H."/>
            <person name="Jaffe D."/>
            <person name="Johnston S.J."/>
            <person name="Kennedy R.C."/>
            <person name="Koo H."/>
            <person name="Kravitz S."/>
            <person name="Kriventseva E.V."/>
            <person name="Kulp D."/>
            <person name="Labutti K."/>
            <person name="Lee E."/>
            <person name="Li S."/>
            <person name="Lovin D.D."/>
            <person name="Mao C."/>
            <person name="Mauceli E."/>
            <person name="Menck C.F."/>
            <person name="Miller J.R."/>
            <person name="Montgomery P."/>
            <person name="Mori A."/>
            <person name="Nascimento A.L."/>
            <person name="Naveira H.F."/>
            <person name="Nusbaum C."/>
            <person name="O'Leary S.B."/>
            <person name="Orvis J."/>
            <person name="Pertea M."/>
            <person name="Quesneville H."/>
            <person name="Reidenbach K.R."/>
            <person name="Rogers Y.-H.C."/>
            <person name="Roth C.W."/>
            <person name="Schneider J.R."/>
            <person name="Schatz M."/>
            <person name="Shumway M."/>
            <person name="Stanke M."/>
            <person name="Stinson E.O."/>
            <person name="Tubio J.M.C."/>
            <person name="Vanzee J.P."/>
            <person name="Verjovski-Almeida S."/>
            <person name="Werner D."/>
            <person name="White O.R."/>
            <person name="Wyder S."/>
            <person name="Zeng Q."/>
            <person name="Zhao Q."/>
            <person name="Zhao Y."/>
            <person name="Hill C.A."/>
            <person name="Raikhel A.S."/>
            <person name="Soares M.B."/>
            <person name="Knudson D.L."/>
            <person name="Lee N.H."/>
            <person name="Galagan J."/>
            <person name="Salzberg S.L."/>
            <person name="Paulsen I.T."/>
            <person name="Dimopoulos G."/>
            <person name="Collins F.H."/>
            <person name="Bruce B."/>
            <person name="Fraser-Liggett C.M."/>
            <person name="Severson D.W."/>
        </authorList>
    </citation>
    <scope>NUCLEOTIDE SEQUENCE [LARGE SCALE GENOMIC DNA]</scope>
    <source>
        <strain>LVPib12</strain>
    </source>
</reference>
<protein>
    <recommendedName>
        <fullName>Phosphotriesterase-related protein</fullName>
        <ecNumber>3.1.-.-</ecNumber>
    </recommendedName>
    <alternativeName>
        <fullName>Parathion hydrolase-related protein</fullName>
    </alternativeName>
</protein>
<dbReference type="EC" id="3.1.-.-"/>
<dbReference type="EMBL" id="CH477655">
    <property type="protein sequence ID" value="EAT37734.1"/>
    <property type="molecule type" value="Genomic_DNA"/>
</dbReference>
<dbReference type="SMR" id="Q0IEH7"/>
<dbReference type="FunCoup" id="Q0IEH7">
    <property type="interactions" value="2"/>
</dbReference>
<dbReference type="STRING" id="7159.Q0IEH7"/>
<dbReference type="PaxDb" id="7159-AAEL010326-PA"/>
<dbReference type="EnsemblMetazoa" id="AAEL010326-RA">
    <property type="protein sequence ID" value="AAEL010326-PA"/>
    <property type="gene ID" value="AAEL010326"/>
</dbReference>
<dbReference type="EnsemblMetazoa" id="AAEL010326-RB">
    <property type="protein sequence ID" value="AAEL010326-PB"/>
    <property type="gene ID" value="AAEL010326"/>
</dbReference>
<dbReference type="GeneID" id="5573233"/>
<dbReference type="KEGG" id="aag:5573233"/>
<dbReference type="VEuPathDB" id="VectorBase:AAEL010326"/>
<dbReference type="eggNOG" id="ENOG502QQQR">
    <property type="taxonomic scope" value="Eukaryota"/>
</dbReference>
<dbReference type="HOGENOM" id="CLU_054760_0_0_1"/>
<dbReference type="InParanoid" id="Q0IEH7"/>
<dbReference type="OMA" id="MVKCGFI"/>
<dbReference type="OrthoDB" id="9998343at2759"/>
<dbReference type="PhylomeDB" id="Q0IEH7"/>
<dbReference type="Proteomes" id="UP000008820">
    <property type="component" value="Chromosome 3"/>
</dbReference>
<dbReference type="Proteomes" id="UP000682892">
    <property type="component" value="Unassembled WGS sequence"/>
</dbReference>
<dbReference type="GO" id="GO:0016788">
    <property type="term" value="F:hydrolase activity, acting on ester bonds"/>
    <property type="evidence" value="ECO:0007669"/>
    <property type="project" value="InterPro"/>
</dbReference>
<dbReference type="GO" id="GO:0008270">
    <property type="term" value="F:zinc ion binding"/>
    <property type="evidence" value="ECO:0007669"/>
    <property type="project" value="InterPro"/>
</dbReference>
<dbReference type="GO" id="GO:0009056">
    <property type="term" value="P:catabolic process"/>
    <property type="evidence" value="ECO:0007669"/>
    <property type="project" value="InterPro"/>
</dbReference>
<dbReference type="Gene3D" id="3.20.20.140">
    <property type="entry name" value="Metal-dependent hydrolases"/>
    <property type="match status" value="1"/>
</dbReference>
<dbReference type="InterPro" id="IPR017947">
    <property type="entry name" value="AryldialkylPase_Zn-BS"/>
</dbReference>
<dbReference type="InterPro" id="IPR032466">
    <property type="entry name" value="Metal_Hydrolase"/>
</dbReference>
<dbReference type="InterPro" id="IPR001559">
    <property type="entry name" value="Phosphotriesterase"/>
</dbReference>
<dbReference type="PANTHER" id="PTHR10819">
    <property type="entry name" value="PHOSPHOTRIESTERASE-RELATED"/>
    <property type="match status" value="1"/>
</dbReference>
<dbReference type="PANTHER" id="PTHR10819:SF3">
    <property type="entry name" value="PHOSPHOTRIESTERASE-RELATED PROTEIN"/>
    <property type="match status" value="1"/>
</dbReference>
<dbReference type="Pfam" id="PF02126">
    <property type="entry name" value="PTE"/>
    <property type="match status" value="1"/>
</dbReference>
<dbReference type="SUPFAM" id="SSF51556">
    <property type="entry name" value="Metallo-dependent hydrolases"/>
    <property type="match status" value="1"/>
</dbReference>
<dbReference type="PROSITE" id="PS01322">
    <property type="entry name" value="PHOSPHOTRIESTERASE_1"/>
    <property type="match status" value="1"/>
</dbReference>
<dbReference type="PROSITE" id="PS51347">
    <property type="entry name" value="PHOSPHOTRIESTERASE_2"/>
    <property type="match status" value="1"/>
</dbReference>
<gene>
    <name type="ORF">AAEL010326</name>
</gene>
<sequence length="356" mass="39993">MAKVMTVRGPIDHPETLGFTLTHEHLSLDFHHFYVAPPPGLDVYVNKKITLQNVGYIRQYPYSSAYNVNFEDDETHDAVLKDVMQYKACGGGAIVENTSHGINRNLKLLYNISEACSVHIVAGTGHYVQAVQPDSVTHMTIEEMGDLYTKEILFGTQVDTAANETTMIKCGMIGEVGSSWPITSFEKKAIQATAETQCVLNCPVTFHPGRDKDAPAEIVRLYLEAGGKADKCVMSHLDRTILDHGDLLEFAKLGTYCQFDLFGTECSYYQLNNTGYMPSDEQRIQSIEMMLQEGYEDRVLMSHDIHTKHRLTHFGGHGYSHILNNILMRLSLRGIDIKTVDNITIKNPAKWLEMKV</sequence>
<accession>Q0IEH7</accession>
<feature type="chain" id="PRO_0000388672" description="Phosphotriesterase-related protein">
    <location>
        <begin position="1"/>
        <end position="356"/>
    </location>
</feature>
<feature type="binding site" evidence="2">
    <location>
        <position position="23"/>
    </location>
    <ligand>
        <name>a divalent metal cation</name>
        <dbReference type="ChEBI" id="CHEBI:60240"/>
        <label>1</label>
    </ligand>
</feature>
<feature type="binding site" evidence="2">
    <location>
        <position position="25"/>
    </location>
    <ligand>
        <name>a divalent metal cation</name>
        <dbReference type="ChEBI" id="CHEBI:60240"/>
        <label>1</label>
    </ligand>
</feature>
<feature type="binding site" evidence="2">
    <location>
        <position position="175"/>
    </location>
    <ligand>
        <name>a divalent metal cation</name>
        <dbReference type="ChEBI" id="CHEBI:60240"/>
        <label>1</label>
    </ligand>
</feature>
<feature type="binding site" evidence="2">
    <location>
        <position position="175"/>
    </location>
    <ligand>
        <name>a divalent metal cation</name>
        <dbReference type="ChEBI" id="CHEBI:60240"/>
        <label>2</label>
    </ligand>
</feature>
<feature type="binding site" evidence="2">
    <location>
        <position position="207"/>
    </location>
    <ligand>
        <name>a divalent metal cation</name>
        <dbReference type="ChEBI" id="CHEBI:60240"/>
        <label>2</label>
    </ligand>
</feature>
<feature type="binding site" evidence="2">
    <location>
        <position position="236"/>
    </location>
    <ligand>
        <name>a divalent metal cation</name>
        <dbReference type="ChEBI" id="CHEBI:60240"/>
        <label>2</label>
    </ligand>
</feature>
<feature type="binding site" evidence="2">
    <location>
        <position position="304"/>
    </location>
    <ligand>
        <name>a divalent metal cation</name>
        <dbReference type="ChEBI" id="CHEBI:60240"/>
        <label>1</label>
    </ligand>
</feature>
<name>PTER_AEDAE</name>
<proteinExistence type="inferred from homology"/>
<evidence type="ECO:0000250" key="1"/>
<evidence type="ECO:0000250" key="2">
    <source>
        <dbReference type="UniProtKB" id="P45548"/>
    </source>
</evidence>
<evidence type="ECO:0000255" key="3">
    <source>
        <dbReference type="PROSITE-ProRule" id="PRU00679"/>
    </source>
</evidence>